<proteinExistence type="inferred from homology"/>
<keyword id="KW-0413">Isomerase</keyword>
<keyword id="KW-1185">Reference proteome</keyword>
<keyword id="KW-0819">tRNA processing</keyword>
<evidence type="ECO:0000255" key="1">
    <source>
        <dbReference type="HAMAP-Rule" id="MF_01082"/>
    </source>
</evidence>
<evidence type="ECO:0000256" key="2">
    <source>
        <dbReference type="SAM" id="MobiDB-lite"/>
    </source>
</evidence>
<protein>
    <recommendedName>
        <fullName evidence="1">tRNA pseudouridine synthase D</fullName>
        <ecNumber evidence="1">5.4.99.27</ecNumber>
    </recommendedName>
    <alternativeName>
        <fullName evidence="1">tRNA pseudouridine(13) synthase</fullName>
    </alternativeName>
    <alternativeName>
        <fullName evidence="1">tRNA pseudouridylate synthase D</fullName>
    </alternativeName>
    <alternativeName>
        <fullName evidence="1">tRNA-uridine isomerase D</fullName>
    </alternativeName>
</protein>
<accession>A7HGV2</accession>
<comment type="function">
    <text evidence="1">Responsible for synthesis of pseudouridine from uracil-13 in transfer RNAs.</text>
</comment>
<comment type="catalytic activity">
    <reaction evidence="1">
        <text>uridine(13) in tRNA = pseudouridine(13) in tRNA</text>
        <dbReference type="Rhea" id="RHEA:42540"/>
        <dbReference type="Rhea" id="RHEA-COMP:10105"/>
        <dbReference type="Rhea" id="RHEA-COMP:10106"/>
        <dbReference type="ChEBI" id="CHEBI:65314"/>
        <dbReference type="ChEBI" id="CHEBI:65315"/>
        <dbReference type="EC" id="5.4.99.27"/>
    </reaction>
</comment>
<comment type="similarity">
    <text evidence="1">Belongs to the pseudouridine synthase TruD family.</text>
</comment>
<name>TRUD_ANADF</name>
<dbReference type="EC" id="5.4.99.27" evidence="1"/>
<dbReference type="EMBL" id="CP000769">
    <property type="protein sequence ID" value="ABS27948.1"/>
    <property type="molecule type" value="Genomic_DNA"/>
</dbReference>
<dbReference type="RefSeq" id="WP_012098576.1">
    <property type="nucleotide sequence ID" value="NC_009675.1"/>
</dbReference>
<dbReference type="SMR" id="A7HGV2"/>
<dbReference type="STRING" id="404589.Anae109_3769"/>
<dbReference type="KEGG" id="afw:Anae109_3769"/>
<dbReference type="eggNOG" id="COG0585">
    <property type="taxonomic scope" value="Bacteria"/>
</dbReference>
<dbReference type="HOGENOM" id="CLU_005281_4_0_7"/>
<dbReference type="OrthoDB" id="1550679at2"/>
<dbReference type="Proteomes" id="UP000006382">
    <property type="component" value="Chromosome"/>
</dbReference>
<dbReference type="GO" id="GO:0005829">
    <property type="term" value="C:cytosol"/>
    <property type="evidence" value="ECO:0007669"/>
    <property type="project" value="TreeGrafter"/>
</dbReference>
<dbReference type="GO" id="GO:0003723">
    <property type="term" value="F:RNA binding"/>
    <property type="evidence" value="ECO:0007669"/>
    <property type="project" value="InterPro"/>
</dbReference>
<dbReference type="GO" id="GO:0160150">
    <property type="term" value="F:tRNA pseudouridine(13) synthase activity"/>
    <property type="evidence" value="ECO:0007669"/>
    <property type="project" value="UniProtKB-EC"/>
</dbReference>
<dbReference type="GO" id="GO:0031119">
    <property type="term" value="P:tRNA pseudouridine synthesis"/>
    <property type="evidence" value="ECO:0007669"/>
    <property type="project" value="UniProtKB-UniRule"/>
</dbReference>
<dbReference type="Gene3D" id="3.30.2350.20">
    <property type="entry name" value="TruD, catalytic domain"/>
    <property type="match status" value="1"/>
</dbReference>
<dbReference type="Gene3D" id="3.30.2340.10">
    <property type="entry name" value="TruD, insertion domain"/>
    <property type="match status" value="1"/>
</dbReference>
<dbReference type="HAMAP" id="MF_01082">
    <property type="entry name" value="TruD"/>
    <property type="match status" value="1"/>
</dbReference>
<dbReference type="InterPro" id="IPR020103">
    <property type="entry name" value="PsdUridine_synth_cat_dom_sf"/>
</dbReference>
<dbReference type="InterPro" id="IPR001656">
    <property type="entry name" value="PsdUridine_synth_TruD"/>
</dbReference>
<dbReference type="InterPro" id="IPR020119">
    <property type="entry name" value="PsdUridine_synth_TruD_CS"/>
</dbReference>
<dbReference type="InterPro" id="IPR011760">
    <property type="entry name" value="PsdUridine_synth_TruD_insert"/>
</dbReference>
<dbReference type="InterPro" id="IPR042214">
    <property type="entry name" value="TruD_catalytic"/>
</dbReference>
<dbReference type="InterPro" id="IPR043165">
    <property type="entry name" value="TruD_insert_sf"/>
</dbReference>
<dbReference type="InterPro" id="IPR050170">
    <property type="entry name" value="TruD_pseudoU_synthase"/>
</dbReference>
<dbReference type="PANTHER" id="PTHR47811">
    <property type="entry name" value="TRNA PSEUDOURIDINE SYNTHASE D"/>
    <property type="match status" value="1"/>
</dbReference>
<dbReference type="PANTHER" id="PTHR47811:SF1">
    <property type="entry name" value="TRNA PSEUDOURIDINE SYNTHASE D"/>
    <property type="match status" value="1"/>
</dbReference>
<dbReference type="Pfam" id="PF01142">
    <property type="entry name" value="TruD"/>
    <property type="match status" value="2"/>
</dbReference>
<dbReference type="SUPFAM" id="SSF55120">
    <property type="entry name" value="Pseudouridine synthase"/>
    <property type="match status" value="1"/>
</dbReference>
<dbReference type="PROSITE" id="PS50984">
    <property type="entry name" value="TRUD"/>
    <property type="match status" value="1"/>
</dbReference>
<dbReference type="PROSITE" id="PS01268">
    <property type="entry name" value="UPF0024"/>
    <property type="match status" value="1"/>
</dbReference>
<feature type="chain" id="PRO_1000149840" description="tRNA pseudouridine synthase D">
    <location>
        <begin position="1"/>
        <end position="349"/>
    </location>
</feature>
<feature type="domain" description="TRUD" evidence="1">
    <location>
        <begin position="150"/>
        <end position="304"/>
    </location>
</feature>
<feature type="region of interest" description="Disordered" evidence="2">
    <location>
        <begin position="1"/>
        <end position="22"/>
    </location>
</feature>
<feature type="active site" description="Nucleophile" evidence="1">
    <location>
        <position position="78"/>
    </location>
</feature>
<organism>
    <name type="scientific">Anaeromyxobacter sp. (strain Fw109-5)</name>
    <dbReference type="NCBI Taxonomy" id="404589"/>
    <lineage>
        <taxon>Bacteria</taxon>
        <taxon>Pseudomonadati</taxon>
        <taxon>Myxococcota</taxon>
        <taxon>Myxococcia</taxon>
        <taxon>Myxococcales</taxon>
        <taxon>Cystobacterineae</taxon>
        <taxon>Anaeromyxobacteraceae</taxon>
        <taxon>Anaeromyxobacter</taxon>
    </lineage>
</organism>
<gene>
    <name evidence="1" type="primary">truD</name>
    <name type="ordered locus">Anae109_3769</name>
</gene>
<reference key="1">
    <citation type="journal article" date="2015" name="Genome Announc.">
        <title>Complete genome sequence of Anaeromyxobacter sp. Fw109-5, an anaerobic, metal-reducing bacterium isolated from a contaminated subsurface environment.</title>
        <authorList>
            <person name="Hwang C."/>
            <person name="Copeland A."/>
            <person name="Lucas S."/>
            <person name="Lapidus A."/>
            <person name="Barry K."/>
            <person name="Glavina Del Rio T."/>
            <person name="Dalin E."/>
            <person name="Tice H."/>
            <person name="Pitluck S."/>
            <person name="Sims D."/>
            <person name="Brettin T."/>
            <person name="Bruce D.C."/>
            <person name="Detter J.C."/>
            <person name="Han C.S."/>
            <person name="Schmutz J."/>
            <person name="Larimer F.W."/>
            <person name="Land M.L."/>
            <person name="Hauser L.J."/>
            <person name="Kyrpides N."/>
            <person name="Lykidis A."/>
            <person name="Richardson P."/>
            <person name="Belieav A."/>
            <person name="Sanford R.A."/>
            <person name="Loeffler F.E."/>
            <person name="Fields M.W."/>
        </authorList>
    </citation>
    <scope>NUCLEOTIDE SEQUENCE [LARGE SCALE GENOMIC DNA]</scope>
    <source>
        <strain>Fw109-5</strain>
    </source>
</reference>
<sequence length="349" mass="37581">MTDAPLVTAELPGSGGSLRRSPEDFRVDEVPAYLPSGAGPHLYLRVEKRGRTTRDALRTLARALGVPERDAGYAGLKDKDAVTTQWLSFPAARDPEPQALASEGLRVLEVSRHANKLRPGHVRANRFQLAVRGGDLARAQAAAAALAERGLPNLFGPQRFGTEGRNAEVGRALLLGDPSPEARRAARDRFLRRLSISAYQALLFNRWLAERMADGLFATAVAGDVLKKLDTGGLFTCADPAVDGPRVQRFEVSPAGPMFGHKLRAAEGEALAREERLLAAEGIQLSDFARGGGEAEGTRRAARLRVEVALAPLEDGYLATFELPKGSYATVVMRELMKAGAELPEADED</sequence>